<name>TX19A_RAT</name>
<proteinExistence type="evidence at transcript level"/>
<feature type="chain" id="PRO_0000325965" description="Testis-expressed protein 19.1">
    <location>
        <begin position="1"/>
        <end position="356"/>
    </location>
</feature>
<feature type="region of interest" description="Interaction with LIRE1" evidence="1">
    <location>
        <begin position="1"/>
        <end position="78"/>
    </location>
</feature>
<feature type="region of interest" description="Disordered" evidence="3">
    <location>
        <begin position="59"/>
        <end position="107"/>
    </location>
</feature>
<feature type="region of interest" description="Important for interaction with piRNA" evidence="2">
    <location>
        <begin position="139"/>
        <end position="186"/>
    </location>
</feature>
<feature type="compositionally biased region" description="Acidic residues" evidence="3">
    <location>
        <begin position="59"/>
        <end position="72"/>
    </location>
</feature>
<feature type="compositionally biased region" description="Basic and acidic residues" evidence="3">
    <location>
        <begin position="73"/>
        <end position="91"/>
    </location>
</feature>
<accession>Q5XHY3</accession>
<dbReference type="EMBL" id="BC083916">
    <property type="protein sequence ID" value="AAH83916.1"/>
    <property type="molecule type" value="mRNA"/>
</dbReference>
<dbReference type="RefSeq" id="NP_001017482.1">
    <property type="nucleotide sequence ID" value="NM_001017482.1"/>
</dbReference>
<dbReference type="FunCoup" id="Q5XHY3">
    <property type="interactions" value="22"/>
</dbReference>
<dbReference type="STRING" id="10116.ENSRNOP00000051811"/>
<dbReference type="CarbonylDB" id="Q5XHY3"/>
<dbReference type="GlyGen" id="Q5XHY3">
    <property type="glycosylation" value="1 site"/>
</dbReference>
<dbReference type="PhosphoSitePlus" id="Q5XHY3"/>
<dbReference type="PaxDb" id="10116-ENSRNOP00000051811"/>
<dbReference type="Ensembl" id="ENSRNOT00000054928.3">
    <property type="protein sequence ID" value="ENSRNOP00000051811.2"/>
    <property type="gene ID" value="ENSRNOG00000036670.3"/>
</dbReference>
<dbReference type="GeneID" id="498033"/>
<dbReference type="KEGG" id="rno:498033"/>
<dbReference type="AGR" id="RGD:1566280"/>
<dbReference type="CTD" id="73679"/>
<dbReference type="RGD" id="1566280">
    <property type="gene designation" value="Tex19.1"/>
</dbReference>
<dbReference type="eggNOG" id="ENOG502T8GZ">
    <property type="taxonomic scope" value="Eukaryota"/>
</dbReference>
<dbReference type="GeneTree" id="ENSGT00390000014279"/>
<dbReference type="HOGENOM" id="CLU_855143_0_0_1"/>
<dbReference type="InParanoid" id="Q5XHY3"/>
<dbReference type="OMA" id="ARGMSCL"/>
<dbReference type="OrthoDB" id="9612827at2759"/>
<dbReference type="PhylomeDB" id="Q5XHY3"/>
<dbReference type="TreeFam" id="TF338441"/>
<dbReference type="PRO" id="PR:Q5XHY3"/>
<dbReference type="Proteomes" id="UP000002494">
    <property type="component" value="Chromosome 10"/>
</dbReference>
<dbReference type="Bgee" id="ENSRNOG00000036670">
    <property type="expression patterns" value="Expressed in testis and 1 other cell type or tissue"/>
</dbReference>
<dbReference type="GO" id="GO:0005737">
    <property type="term" value="C:cytoplasm"/>
    <property type="evidence" value="ECO:0000318"/>
    <property type="project" value="GO_Central"/>
</dbReference>
<dbReference type="GO" id="GO:0005634">
    <property type="term" value="C:nucleus"/>
    <property type="evidence" value="ECO:0000318"/>
    <property type="project" value="GO_Central"/>
</dbReference>
<dbReference type="GO" id="GO:0034584">
    <property type="term" value="F:piRNA binding"/>
    <property type="evidence" value="ECO:0000250"/>
    <property type="project" value="UniProtKB"/>
</dbReference>
<dbReference type="GO" id="GO:0030154">
    <property type="term" value="P:cell differentiation"/>
    <property type="evidence" value="ECO:0007669"/>
    <property type="project" value="UniProtKB-KW"/>
</dbReference>
<dbReference type="GO" id="GO:0008584">
    <property type="term" value="P:male gonad development"/>
    <property type="evidence" value="ECO:0000318"/>
    <property type="project" value="GO_Central"/>
</dbReference>
<dbReference type="GO" id="GO:0007140">
    <property type="term" value="P:male meiotic nuclear division"/>
    <property type="evidence" value="ECO:0000250"/>
    <property type="project" value="UniProtKB"/>
</dbReference>
<dbReference type="GO" id="GO:0001890">
    <property type="term" value="P:placenta development"/>
    <property type="evidence" value="ECO:0000318"/>
    <property type="project" value="GO_Central"/>
</dbReference>
<dbReference type="GO" id="GO:0007131">
    <property type="term" value="P:reciprocal meiotic recombination"/>
    <property type="evidence" value="ECO:0000250"/>
    <property type="project" value="UniProtKB"/>
</dbReference>
<dbReference type="GO" id="GO:0007283">
    <property type="term" value="P:spermatogenesis"/>
    <property type="evidence" value="ECO:0000250"/>
    <property type="project" value="UniProtKB"/>
</dbReference>
<dbReference type="InterPro" id="IPR029093">
    <property type="entry name" value="TEX19"/>
</dbReference>
<dbReference type="PANTHER" id="PTHR31387">
    <property type="entry name" value="TESTIS-EXPRESSED PROTEIN 19"/>
    <property type="match status" value="1"/>
</dbReference>
<dbReference type="PANTHER" id="PTHR31387:SF0">
    <property type="entry name" value="TESTIS-EXPRESSED PROTEIN 19"/>
    <property type="match status" value="1"/>
</dbReference>
<dbReference type="Pfam" id="PF15553">
    <property type="entry name" value="TEX19"/>
    <property type="match status" value="1"/>
</dbReference>
<sequence length="356" mass="40855">MCPPVSVRHGARGMSCLYGAWLYQLVHGEQMKMCFACFKAAFLLNKFYLEMGYWEQEELSEEEEEEEVWDAEPMEHLSESESLESDSKQDAGSEQDAGSEPNTRSEQDAWQGVGSLYVPQSVSEYGGPGALVPTPSWTQWVVFSISVPTELLPQEAVPLDLGPEDVEWTQALPWRLDVLFPCSHRLIPPLSWWDILDVMPSLGQPVLLELRSLWPLDQSVAQTWLQDQKFVLLLDSIHFMCHLLSMHVCWAVRTQVQHWQVLLNPGEMWVAHLKRVLFRPRGLYPWSLSILKSSDLGMELVPAAFYLRKKGFWVGSFLPWNSSIPETWSWDPGERLFITDATICATNYHFARSFFP</sequence>
<organism>
    <name type="scientific">Rattus norvegicus</name>
    <name type="common">Rat</name>
    <dbReference type="NCBI Taxonomy" id="10116"/>
    <lineage>
        <taxon>Eukaryota</taxon>
        <taxon>Metazoa</taxon>
        <taxon>Chordata</taxon>
        <taxon>Craniata</taxon>
        <taxon>Vertebrata</taxon>
        <taxon>Euteleostomi</taxon>
        <taxon>Mammalia</taxon>
        <taxon>Eutheria</taxon>
        <taxon>Euarchontoglires</taxon>
        <taxon>Glires</taxon>
        <taxon>Rodentia</taxon>
        <taxon>Myomorpha</taxon>
        <taxon>Muroidea</taxon>
        <taxon>Muridae</taxon>
        <taxon>Murinae</taxon>
        <taxon>Rattus</taxon>
    </lineage>
</organism>
<comment type="function">
    <text evidence="2">Required during spermatogenesis and placenta development, participating in the repression of retrotransposable elements and prevent their mobilization. Collaborates with the Piwi-interacting RNA (piRNA) pathway, which mediates the repression of transposable elements during meiosis by forming complexes composed of piRNAs and Piwi proteins. Interacts with Piwi proteins and directly binds piRNAs, a class of 24 to 30 nucleotide RNAs that are generated by a Dicer-independent mechanism and are primarily derived from transposons and other repeated sequence elements. Also during spermatogenesis, promotes, with UBR2, SPO11-dependent recombination foci to accumulate and drive robust homologous chromosome synapsis. Interacts with LINE-1 retrotransposon encoded LIRE1, stimulates LIRE1 polyubiquitination, mediated by UBR2, and degradation, inhibiting LINE-1 retrotransposon mobilization.</text>
</comment>
<comment type="subunit">
    <text evidence="2">Interacts with UBR2; does not lead to Tex19.1 degradation and stabilizes it. Interacts with piRNA-associated proteins DDX4, EDC4, MAEL, PIWIL1, PIWIL2, RANBP9 and TDRD6. Interacts with L1RE1.</text>
</comment>
<comment type="subcellular location">
    <subcellularLocation>
        <location evidence="2">Cytoplasm</location>
    </subcellularLocation>
    <text evidence="2">Was initially reported to localize in the nucleus. However, it was later shown to localize in cytoplasm only. Cytoplasmic localization is distinct from the meiotic nuage, also named P granule, a germ-cell-specific organelle required to repress transposon activity during meiosis.</text>
</comment>
<protein>
    <recommendedName>
        <fullName>Testis-expressed protein 19.1</fullName>
    </recommendedName>
    <alternativeName>
        <fullName>Testis-expressed protein 19A</fullName>
    </alternativeName>
    <alternativeName>
        <fullName>Tex19.1</fullName>
    </alternativeName>
</protein>
<gene>
    <name type="primary">Tex19.1</name>
    <name type="synonym">Tex19a</name>
</gene>
<evidence type="ECO:0000250" key="1">
    <source>
        <dbReference type="UniProtKB" id="Q8NA77"/>
    </source>
</evidence>
<evidence type="ECO:0000250" key="2">
    <source>
        <dbReference type="UniProtKB" id="Q99MV2"/>
    </source>
</evidence>
<evidence type="ECO:0000256" key="3">
    <source>
        <dbReference type="SAM" id="MobiDB-lite"/>
    </source>
</evidence>
<keyword id="KW-0963">Cytoplasm</keyword>
<keyword id="KW-0221">Differentiation</keyword>
<keyword id="KW-0469">Meiosis</keyword>
<keyword id="KW-1185">Reference proteome</keyword>
<keyword id="KW-0744">Spermatogenesis</keyword>
<reference key="1">
    <citation type="journal article" date="2004" name="Genome Res.">
        <title>The status, quality, and expansion of the NIH full-length cDNA project: the Mammalian Gene Collection (MGC).</title>
        <authorList>
            <consortium name="The MGC Project Team"/>
        </authorList>
    </citation>
    <scope>NUCLEOTIDE SEQUENCE [LARGE SCALE MRNA]</scope>
    <source>
        <tissue>Testis</tissue>
    </source>
</reference>